<feature type="chain" id="PRO_0000254045" description="Probable ribonuclease ZC3H12B">
    <location>
        <begin position="1"/>
        <end position="836"/>
    </location>
</feature>
<feature type="domain" description="RNase NYN" evidence="1">
    <location>
        <begin position="190"/>
        <end position="345"/>
    </location>
</feature>
<feature type="zinc finger region" description="C3H1-type" evidence="2">
    <location>
        <begin position="355"/>
        <end position="380"/>
    </location>
</feature>
<feature type="region of interest" description="Disordered" evidence="3">
    <location>
        <begin position="1"/>
        <end position="92"/>
    </location>
</feature>
<feature type="compositionally biased region" description="Basic and acidic residues" evidence="3">
    <location>
        <begin position="8"/>
        <end position="28"/>
    </location>
</feature>
<feature type="compositionally biased region" description="Acidic residues" evidence="3">
    <location>
        <begin position="35"/>
        <end position="46"/>
    </location>
</feature>
<feature type="compositionally biased region" description="Polar residues" evidence="3">
    <location>
        <begin position="50"/>
        <end position="60"/>
    </location>
</feature>
<feature type="compositionally biased region" description="Basic residues" evidence="3">
    <location>
        <begin position="70"/>
        <end position="80"/>
    </location>
</feature>
<feature type="splice variant" id="VSP_039896" description="In isoform 2." evidence="4">
    <original>SSILQDGKLDLEKEYQAKMEFALKLGYAEEQIQSVLNKLGPESLINDVLAELVRLGNKGDSEGQINLSLLVPRGP</original>
    <variation>NHLLMMYWQSLSDLGTKVIQKG</variation>
    <location>
        <begin position="94"/>
        <end position="168"/>
    </location>
</feature>
<feature type="strand" evidence="6">
    <location>
        <begin position="188"/>
        <end position="190"/>
    </location>
</feature>
<feature type="strand" evidence="6">
    <location>
        <begin position="193"/>
        <end position="196"/>
    </location>
</feature>
<feature type="helix" evidence="6">
    <location>
        <begin position="197"/>
        <end position="204"/>
    </location>
</feature>
<feature type="turn" evidence="6">
    <location>
        <begin position="206"/>
        <end position="208"/>
    </location>
</feature>
<feature type="strand" evidence="6">
    <location>
        <begin position="209"/>
        <end position="211"/>
    </location>
</feature>
<feature type="helix" evidence="6">
    <location>
        <begin position="212"/>
        <end position="224"/>
    </location>
</feature>
<feature type="strand" evidence="6">
    <location>
        <begin position="230"/>
        <end position="235"/>
    </location>
</feature>
<feature type="helix" evidence="6">
    <location>
        <begin position="236"/>
        <end position="239"/>
    </location>
</feature>
<feature type="strand" evidence="6">
    <location>
        <begin position="244"/>
        <end position="246"/>
    </location>
</feature>
<feature type="strand" evidence="6">
    <location>
        <begin position="248"/>
        <end position="250"/>
    </location>
</feature>
<feature type="helix" evidence="6">
    <location>
        <begin position="253"/>
        <end position="258"/>
    </location>
</feature>
<feature type="turn" evidence="6">
    <location>
        <begin position="259"/>
        <end position="261"/>
    </location>
</feature>
<feature type="strand" evidence="6">
    <location>
        <begin position="263"/>
        <end position="266"/>
    </location>
</feature>
<feature type="strand" evidence="6">
    <location>
        <begin position="269"/>
        <end position="276"/>
    </location>
</feature>
<feature type="helix" evidence="6">
    <location>
        <begin position="281"/>
        <end position="291"/>
    </location>
</feature>
<feature type="strand" evidence="6">
    <location>
        <begin position="294"/>
        <end position="296"/>
    </location>
</feature>
<feature type="helix" evidence="6">
    <location>
        <begin position="302"/>
        <end position="307"/>
    </location>
</feature>
<feature type="helix" evidence="6">
    <location>
        <begin position="309"/>
        <end position="318"/>
    </location>
</feature>
<feature type="strand" evidence="6">
    <location>
        <begin position="333"/>
        <end position="336"/>
    </location>
</feature>
<feature type="helix" evidence="6">
    <location>
        <begin position="343"/>
        <end position="346"/>
    </location>
</feature>
<feature type="strand" evidence="6">
    <location>
        <begin position="347"/>
        <end position="350"/>
    </location>
</feature>
<dbReference type="EC" id="3.1.-.-"/>
<dbReference type="EMBL" id="AL050306">
    <property type="status" value="NOT_ANNOTATED_CDS"/>
    <property type="molecule type" value="Genomic_DNA"/>
</dbReference>
<dbReference type="EMBL" id="Z83841">
    <property type="status" value="NOT_ANNOTATED_CDS"/>
    <property type="molecule type" value="Genomic_DNA"/>
</dbReference>
<dbReference type="EMBL" id="BC140767">
    <property type="protein sequence ID" value="AAI40768.1"/>
    <property type="status" value="ALT_INIT"/>
    <property type="molecule type" value="mRNA"/>
</dbReference>
<dbReference type="EMBL" id="BC171781">
    <property type="protein sequence ID" value="AAI71781.1"/>
    <property type="status" value="ALT_INIT"/>
    <property type="molecule type" value="mRNA"/>
</dbReference>
<dbReference type="EMBL" id="BX647241">
    <property type="protein sequence ID" value="CAI46044.1"/>
    <property type="status" value="ALT_INIT"/>
    <property type="molecule type" value="mRNA"/>
</dbReference>
<dbReference type="CCDS" id="CCDS48131.2">
    <molecule id="Q5HYM0-1"/>
</dbReference>
<dbReference type="RefSeq" id="NP_001010888.3">
    <molecule id="Q5HYM0-1"/>
    <property type="nucleotide sequence ID" value="NM_001010888.4"/>
</dbReference>
<dbReference type="RefSeq" id="XP_011529241.1">
    <molecule id="Q5HYM0-1"/>
    <property type="nucleotide sequence ID" value="XM_011530939.3"/>
</dbReference>
<dbReference type="RefSeq" id="XP_016884967.1">
    <property type="nucleotide sequence ID" value="XM_017029478.1"/>
</dbReference>
<dbReference type="RefSeq" id="XP_016884968.1">
    <molecule id="Q5HYM0-1"/>
    <property type="nucleotide sequence ID" value="XM_017029479.2"/>
</dbReference>
<dbReference type="RefSeq" id="XP_016884969.1">
    <molecule id="Q5HYM0-1"/>
    <property type="nucleotide sequence ID" value="XM_017029480.2"/>
</dbReference>
<dbReference type="RefSeq" id="XP_016884970.1">
    <molecule id="Q5HYM0-1"/>
    <property type="nucleotide sequence ID" value="XM_017029481.2"/>
</dbReference>
<dbReference type="RefSeq" id="XP_016884971.1">
    <molecule id="Q5HYM0-1"/>
    <property type="nucleotide sequence ID" value="XM_017029482.2"/>
</dbReference>
<dbReference type="RefSeq" id="XP_016884972.1">
    <molecule id="Q5HYM0-1"/>
    <property type="nucleotide sequence ID" value="XM_017029483.2"/>
</dbReference>
<dbReference type="RefSeq" id="XP_016884973.1">
    <molecule id="Q5HYM0-1"/>
    <property type="nucleotide sequence ID" value="XM_017029484.2"/>
</dbReference>
<dbReference type="RefSeq" id="XP_047298030.1">
    <molecule id="Q5HYM0-1"/>
    <property type="nucleotide sequence ID" value="XM_047442074.1"/>
</dbReference>
<dbReference type="RefSeq" id="XP_047298031.1">
    <molecule id="Q5HYM0-1"/>
    <property type="nucleotide sequence ID" value="XM_047442075.1"/>
</dbReference>
<dbReference type="RefSeq" id="XP_047298032.1">
    <molecule id="Q5HYM0-1"/>
    <property type="nucleotide sequence ID" value="XM_047442076.1"/>
</dbReference>
<dbReference type="RefSeq" id="XP_047298033.1">
    <molecule id="Q5HYM0-1"/>
    <property type="nucleotide sequence ID" value="XM_047442077.1"/>
</dbReference>
<dbReference type="RefSeq" id="XP_047298034.1">
    <molecule id="Q5HYM0-1"/>
    <property type="nucleotide sequence ID" value="XM_047442078.1"/>
</dbReference>
<dbReference type="RefSeq" id="XP_047298035.1">
    <molecule id="Q5HYM0-1"/>
    <property type="nucleotide sequence ID" value="XM_047442079.1"/>
</dbReference>
<dbReference type="RefSeq" id="XP_047298036.1">
    <molecule id="Q5HYM0-1"/>
    <property type="nucleotide sequence ID" value="XM_047442080.1"/>
</dbReference>
<dbReference type="RefSeq" id="XP_054182950.1">
    <molecule id="Q5HYM0-1"/>
    <property type="nucleotide sequence ID" value="XM_054326975.1"/>
</dbReference>
<dbReference type="RefSeq" id="XP_054182951.1">
    <molecule id="Q5HYM0-1"/>
    <property type="nucleotide sequence ID" value="XM_054326976.1"/>
</dbReference>
<dbReference type="RefSeq" id="XP_054182952.1">
    <molecule id="Q5HYM0-1"/>
    <property type="nucleotide sequence ID" value="XM_054326977.1"/>
</dbReference>
<dbReference type="RefSeq" id="XP_054182953.1">
    <molecule id="Q5HYM0-1"/>
    <property type="nucleotide sequence ID" value="XM_054326978.1"/>
</dbReference>
<dbReference type="RefSeq" id="XP_054182954.1">
    <molecule id="Q5HYM0-1"/>
    <property type="nucleotide sequence ID" value="XM_054326979.1"/>
</dbReference>
<dbReference type="RefSeq" id="XP_054182955.1">
    <molecule id="Q5HYM0-1"/>
    <property type="nucleotide sequence ID" value="XM_054326980.1"/>
</dbReference>
<dbReference type="RefSeq" id="XP_054182956.1">
    <molecule id="Q5HYM0-1"/>
    <property type="nucleotide sequence ID" value="XM_054326981.1"/>
</dbReference>
<dbReference type="RefSeq" id="XP_054182957.1">
    <molecule id="Q5HYM0-1"/>
    <property type="nucleotide sequence ID" value="XM_054326982.1"/>
</dbReference>
<dbReference type="RefSeq" id="XP_054182958.1">
    <molecule id="Q5HYM0-1"/>
    <property type="nucleotide sequence ID" value="XM_054326983.1"/>
</dbReference>
<dbReference type="RefSeq" id="XP_054182959.1">
    <molecule id="Q5HYM0-1"/>
    <property type="nucleotide sequence ID" value="XM_054326984.1"/>
</dbReference>
<dbReference type="RefSeq" id="XP_054182960.1">
    <molecule id="Q5HYM0-1"/>
    <property type="nucleotide sequence ID" value="XM_054326985.1"/>
</dbReference>
<dbReference type="RefSeq" id="XP_054182961.1">
    <molecule id="Q5HYM0-1"/>
    <property type="nucleotide sequence ID" value="XM_054326986.1"/>
</dbReference>
<dbReference type="RefSeq" id="XP_054182962.1">
    <molecule id="Q5HYM0-1"/>
    <property type="nucleotide sequence ID" value="XM_054326987.1"/>
</dbReference>
<dbReference type="RefSeq" id="XP_054182963.1">
    <molecule id="Q5HYM0-1"/>
    <property type="nucleotide sequence ID" value="XM_054326988.1"/>
</dbReference>
<dbReference type="PDB" id="6SJD">
    <property type="method" value="X-ray"/>
    <property type="resolution" value="3.29 A"/>
    <property type="chains" value="A/B=185-362"/>
</dbReference>
<dbReference type="PDBsum" id="6SJD"/>
<dbReference type="SMR" id="Q5HYM0"/>
<dbReference type="BioGRID" id="131074">
    <property type="interactions" value="3"/>
</dbReference>
<dbReference type="FunCoup" id="Q5HYM0">
    <property type="interactions" value="29"/>
</dbReference>
<dbReference type="IntAct" id="Q5HYM0">
    <property type="interactions" value="1"/>
</dbReference>
<dbReference type="STRING" id="9606.ENSP00000340839"/>
<dbReference type="GlyGen" id="Q5HYM0">
    <property type="glycosylation" value="1 site, 1 O-linked glycan (1 site)"/>
</dbReference>
<dbReference type="iPTMnet" id="Q5HYM0"/>
<dbReference type="PhosphoSitePlus" id="Q5HYM0"/>
<dbReference type="BioMuta" id="ZC3H12B"/>
<dbReference type="jPOST" id="Q5HYM0"/>
<dbReference type="MassIVE" id="Q5HYM0"/>
<dbReference type="PaxDb" id="9606-ENSP00000340839"/>
<dbReference type="PeptideAtlas" id="Q5HYM0"/>
<dbReference type="ProteomicsDB" id="19028"/>
<dbReference type="ProteomicsDB" id="62954">
    <molecule id="Q5HYM0-1"/>
</dbReference>
<dbReference type="ProteomicsDB" id="62955">
    <molecule id="Q5HYM0-2"/>
</dbReference>
<dbReference type="Pumba" id="Q5HYM0"/>
<dbReference type="Antibodypedia" id="414">
    <property type="antibodies" value="82 antibodies from 20 providers"/>
</dbReference>
<dbReference type="DNASU" id="340554"/>
<dbReference type="Ensembl" id="ENST00000338957.5">
    <molecule id="Q5HYM0-1"/>
    <property type="protein sequence ID" value="ENSP00000340839.4"/>
    <property type="gene ID" value="ENSG00000102053.13"/>
</dbReference>
<dbReference type="GeneID" id="340554"/>
<dbReference type="KEGG" id="hsa:340554"/>
<dbReference type="MANE-Select" id="ENST00000338957.5">
    <property type="protein sequence ID" value="ENSP00000340839.4"/>
    <property type="RefSeq nucleotide sequence ID" value="NM_001010888.4"/>
    <property type="RefSeq protein sequence ID" value="NP_001010888.3"/>
</dbReference>
<dbReference type="UCSC" id="uc010nko.3">
    <molecule id="Q5HYM0-1"/>
    <property type="organism name" value="human"/>
</dbReference>
<dbReference type="AGR" id="HGNC:17407"/>
<dbReference type="CTD" id="340554"/>
<dbReference type="DisGeNET" id="340554"/>
<dbReference type="GeneCards" id="ZC3H12B"/>
<dbReference type="HGNC" id="HGNC:17407">
    <property type="gene designation" value="ZC3H12B"/>
</dbReference>
<dbReference type="HPA" id="ENSG00000102053">
    <property type="expression patterns" value="Low tissue specificity"/>
</dbReference>
<dbReference type="MIM" id="300889">
    <property type="type" value="gene"/>
</dbReference>
<dbReference type="neXtProt" id="NX_Q5HYM0"/>
<dbReference type="OpenTargets" id="ENSG00000102053"/>
<dbReference type="VEuPathDB" id="HostDB:ENSG00000102053"/>
<dbReference type="eggNOG" id="KOG3777">
    <property type="taxonomic scope" value="Eukaryota"/>
</dbReference>
<dbReference type="GeneTree" id="ENSGT00940000159316"/>
<dbReference type="HOGENOM" id="CLU_013020_1_0_1"/>
<dbReference type="InParanoid" id="Q5HYM0"/>
<dbReference type="OMA" id="WDPLPCT"/>
<dbReference type="OrthoDB" id="392925at2759"/>
<dbReference type="PAN-GO" id="Q5HYM0">
    <property type="GO annotations" value="5 GO annotations based on evolutionary models"/>
</dbReference>
<dbReference type="PhylomeDB" id="Q5HYM0"/>
<dbReference type="TreeFam" id="TF315783"/>
<dbReference type="PathwayCommons" id="Q5HYM0"/>
<dbReference type="SignaLink" id="Q5HYM0"/>
<dbReference type="BioGRID-ORCS" id="340554">
    <property type="hits" value="12 hits in 766 CRISPR screens"/>
</dbReference>
<dbReference type="ChiTaRS" id="ZC3H12B">
    <property type="organism name" value="human"/>
</dbReference>
<dbReference type="GenomeRNAi" id="340554"/>
<dbReference type="Pharos" id="Q5HYM0">
    <property type="development level" value="Tbio"/>
</dbReference>
<dbReference type="PRO" id="PR:Q5HYM0"/>
<dbReference type="Proteomes" id="UP000005640">
    <property type="component" value="Chromosome X"/>
</dbReference>
<dbReference type="RNAct" id="Q5HYM0">
    <property type="molecule type" value="protein"/>
</dbReference>
<dbReference type="Bgee" id="ENSG00000102053">
    <property type="expression patterns" value="Expressed in prefrontal cortex and 121 other cell types or tissues"/>
</dbReference>
<dbReference type="GO" id="GO:0036464">
    <property type="term" value="C:cytoplasmic ribonucleoprotein granule"/>
    <property type="evidence" value="ECO:0000318"/>
    <property type="project" value="GO_Central"/>
</dbReference>
<dbReference type="GO" id="GO:0005634">
    <property type="term" value="C:nucleus"/>
    <property type="evidence" value="ECO:0000318"/>
    <property type="project" value="GO_Central"/>
</dbReference>
<dbReference type="GO" id="GO:0003729">
    <property type="term" value="F:mRNA binding"/>
    <property type="evidence" value="ECO:0000318"/>
    <property type="project" value="GO_Central"/>
</dbReference>
<dbReference type="GO" id="GO:0004521">
    <property type="term" value="F:RNA endonuclease activity"/>
    <property type="evidence" value="ECO:0000318"/>
    <property type="project" value="GO_Central"/>
</dbReference>
<dbReference type="GO" id="GO:0008270">
    <property type="term" value="F:zinc ion binding"/>
    <property type="evidence" value="ECO:0007669"/>
    <property type="project" value="UniProtKB-KW"/>
</dbReference>
<dbReference type="CDD" id="cd18729">
    <property type="entry name" value="PIN_Zc3h12-like"/>
    <property type="match status" value="1"/>
</dbReference>
<dbReference type="FunFam" id="3.40.50.11980:FF:000001">
    <property type="entry name" value="ZC3H12A isoform 1"/>
    <property type="match status" value="1"/>
</dbReference>
<dbReference type="Gene3D" id="3.40.50.11980">
    <property type="match status" value="1"/>
</dbReference>
<dbReference type="InterPro" id="IPR040546">
    <property type="entry name" value="Rege-1_UBA-like"/>
</dbReference>
<dbReference type="InterPro" id="IPR040757">
    <property type="entry name" value="Regnase_1/ZC3H12_C"/>
</dbReference>
<dbReference type="InterPro" id="IPR021869">
    <property type="entry name" value="RNase_Zc3h12_NYN"/>
</dbReference>
<dbReference type="InterPro" id="IPR051101">
    <property type="entry name" value="ZC3H12/N4BP1_RNase_Reg"/>
</dbReference>
<dbReference type="InterPro" id="IPR000571">
    <property type="entry name" value="Znf_CCCH"/>
</dbReference>
<dbReference type="PANTHER" id="PTHR12876">
    <property type="entry name" value="N4BP1-RELATED"/>
    <property type="match status" value="1"/>
</dbReference>
<dbReference type="PANTHER" id="PTHR12876:SF27">
    <property type="entry name" value="RIBONUCLEASE ZC3H12B-RELATED"/>
    <property type="match status" value="1"/>
</dbReference>
<dbReference type="Pfam" id="PF18561">
    <property type="entry name" value="Regnase_1_C"/>
    <property type="match status" value="1"/>
</dbReference>
<dbReference type="Pfam" id="PF11977">
    <property type="entry name" value="RNase_Zc3h12a"/>
    <property type="match status" value="1"/>
</dbReference>
<dbReference type="Pfam" id="PF18039">
    <property type="entry name" value="UBA_6"/>
    <property type="match status" value="1"/>
</dbReference>
<dbReference type="PROSITE" id="PS50103">
    <property type="entry name" value="ZF_C3H1"/>
    <property type="match status" value="1"/>
</dbReference>
<protein>
    <recommendedName>
        <fullName>Probable ribonuclease ZC3H12B</fullName>
        <ecNumber>3.1.-.-</ecNumber>
    </recommendedName>
    <alternativeName>
        <fullName>MCP-induced protein 2</fullName>
    </alternativeName>
    <alternativeName>
        <fullName>Zinc finger CCCH domain-containing protein 12B</fullName>
    </alternativeName>
</protein>
<reference key="1">
    <citation type="journal article" date="2005" name="Nature">
        <title>The DNA sequence of the human X chromosome.</title>
        <authorList>
            <person name="Ross M.T."/>
            <person name="Grafham D.V."/>
            <person name="Coffey A.J."/>
            <person name="Scherer S."/>
            <person name="McLay K."/>
            <person name="Muzny D."/>
            <person name="Platzer M."/>
            <person name="Howell G.R."/>
            <person name="Burrows C."/>
            <person name="Bird C.P."/>
            <person name="Frankish A."/>
            <person name="Lovell F.L."/>
            <person name="Howe K.L."/>
            <person name="Ashurst J.L."/>
            <person name="Fulton R.S."/>
            <person name="Sudbrak R."/>
            <person name="Wen G."/>
            <person name="Jones M.C."/>
            <person name="Hurles M.E."/>
            <person name="Andrews T.D."/>
            <person name="Scott C.E."/>
            <person name="Searle S."/>
            <person name="Ramser J."/>
            <person name="Whittaker A."/>
            <person name="Deadman R."/>
            <person name="Carter N.P."/>
            <person name="Hunt S.E."/>
            <person name="Chen R."/>
            <person name="Cree A."/>
            <person name="Gunaratne P."/>
            <person name="Havlak P."/>
            <person name="Hodgson A."/>
            <person name="Metzker M.L."/>
            <person name="Richards S."/>
            <person name="Scott G."/>
            <person name="Steffen D."/>
            <person name="Sodergren E."/>
            <person name="Wheeler D.A."/>
            <person name="Worley K.C."/>
            <person name="Ainscough R."/>
            <person name="Ambrose K.D."/>
            <person name="Ansari-Lari M.A."/>
            <person name="Aradhya S."/>
            <person name="Ashwell R.I."/>
            <person name="Babbage A.K."/>
            <person name="Bagguley C.L."/>
            <person name="Ballabio A."/>
            <person name="Banerjee R."/>
            <person name="Barker G.E."/>
            <person name="Barlow K.F."/>
            <person name="Barrett I.P."/>
            <person name="Bates K.N."/>
            <person name="Beare D.M."/>
            <person name="Beasley H."/>
            <person name="Beasley O."/>
            <person name="Beck A."/>
            <person name="Bethel G."/>
            <person name="Blechschmidt K."/>
            <person name="Brady N."/>
            <person name="Bray-Allen S."/>
            <person name="Bridgeman A.M."/>
            <person name="Brown A.J."/>
            <person name="Brown M.J."/>
            <person name="Bonnin D."/>
            <person name="Bruford E.A."/>
            <person name="Buhay C."/>
            <person name="Burch P."/>
            <person name="Burford D."/>
            <person name="Burgess J."/>
            <person name="Burrill W."/>
            <person name="Burton J."/>
            <person name="Bye J.M."/>
            <person name="Carder C."/>
            <person name="Carrel L."/>
            <person name="Chako J."/>
            <person name="Chapman J.C."/>
            <person name="Chavez D."/>
            <person name="Chen E."/>
            <person name="Chen G."/>
            <person name="Chen Y."/>
            <person name="Chen Z."/>
            <person name="Chinault C."/>
            <person name="Ciccodicola A."/>
            <person name="Clark S.Y."/>
            <person name="Clarke G."/>
            <person name="Clee C.M."/>
            <person name="Clegg S."/>
            <person name="Clerc-Blankenburg K."/>
            <person name="Clifford K."/>
            <person name="Cobley V."/>
            <person name="Cole C.G."/>
            <person name="Conquer J.S."/>
            <person name="Corby N."/>
            <person name="Connor R.E."/>
            <person name="David R."/>
            <person name="Davies J."/>
            <person name="Davis C."/>
            <person name="Davis J."/>
            <person name="Delgado O."/>
            <person name="Deshazo D."/>
            <person name="Dhami P."/>
            <person name="Ding Y."/>
            <person name="Dinh H."/>
            <person name="Dodsworth S."/>
            <person name="Draper H."/>
            <person name="Dugan-Rocha S."/>
            <person name="Dunham A."/>
            <person name="Dunn M."/>
            <person name="Durbin K.J."/>
            <person name="Dutta I."/>
            <person name="Eades T."/>
            <person name="Ellwood M."/>
            <person name="Emery-Cohen A."/>
            <person name="Errington H."/>
            <person name="Evans K.L."/>
            <person name="Faulkner L."/>
            <person name="Francis F."/>
            <person name="Frankland J."/>
            <person name="Fraser A.E."/>
            <person name="Galgoczy P."/>
            <person name="Gilbert J."/>
            <person name="Gill R."/>
            <person name="Gloeckner G."/>
            <person name="Gregory S.G."/>
            <person name="Gribble S."/>
            <person name="Griffiths C."/>
            <person name="Grocock R."/>
            <person name="Gu Y."/>
            <person name="Gwilliam R."/>
            <person name="Hamilton C."/>
            <person name="Hart E.A."/>
            <person name="Hawes A."/>
            <person name="Heath P.D."/>
            <person name="Heitmann K."/>
            <person name="Hennig S."/>
            <person name="Hernandez J."/>
            <person name="Hinzmann B."/>
            <person name="Ho S."/>
            <person name="Hoffs M."/>
            <person name="Howden P.J."/>
            <person name="Huckle E.J."/>
            <person name="Hume J."/>
            <person name="Hunt P.J."/>
            <person name="Hunt A.R."/>
            <person name="Isherwood J."/>
            <person name="Jacob L."/>
            <person name="Johnson D."/>
            <person name="Jones S."/>
            <person name="de Jong P.J."/>
            <person name="Joseph S.S."/>
            <person name="Keenan S."/>
            <person name="Kelly S."/>
            <person name="Kershaw J.K."/>
            <person name="Khan Z."/>
            <person name="Kioschis P."/>
            <person name="Klages S."/>
            <person name="Knights A.J."/>
            <person name="Kosiura A."/>
            <person name="Kovar-Smith C."/>
            <person name="Laird G.K."/>
            <person name="Langford C."/>
            <person name="Lawlor S."/>
            <person name="Leversha M."/>
            <person name="Lewis L."/>
            <person name="Liu W."/>
            <person name="Lloyd C."/>
            <person name="Lloyd D.M."/>
            <person name="Loulseged H."/>
            <person name="Loveland J.E."/>
            <person name="Lovell J.D."/>
            <person name="Lozado R."/>
            <person name="Lu J."/>
            <person name="Lyne R."/>
            <person name="Ma J."/>
            <person name="Maheshwari M."/>
            <person name="Matthews L.H."/>
            <person name="McDowall J."/>
            <person name="McLaren S."/>
            <person name="McMurray A."/>
            <person name="Meidl P."/>
            <person name="Meitinger T."/>
            <person name="Milne S."/>
            <person name="Miner G."/>
            <person name="Mistry S.L."/>
            <person name="Morgan M."/>
            <person name="Morris S."/>
            <person name="Mueller I."/>
            <person name="Mullikin J.C."/>
            <person name="Nguyen N."/>
            <person name="Nordsiek G."/>
            <person name="Nyakatura G."/>
            <person name="O'dell C.N."/>
            <person name="Okwuonu G."/>
            <person name="Palmer S."/>
            <person name="Pandian R."/>
            <person name="Parker D."/>
            <person name="Parrish J."/>
            <person name="Pasternak S."/>
            <person name="Patel D."/>
            <person name="Pearce A.V."/>
            <person name="Pearson D.M."/>
            <person name="Pelan S.E."/>
            <person name="Perez L."/>
            <person name="Porter K.M."/>
            <person name="Ramsey Y."/>
            <person name="Reichwald K."/>
            <person name="Rhodes S."/>
            <person name="Ridler K.A."/>
            <person name="Schlessinger D."/>
            <person name="Schueler M.G."/>
            <person name="Sehra H.K."/>
            <person name="Shaw-Smith C."/>
            <person name="Shen H."/>
            <person name="Sheridan E.M."/>
            <person name="Shownkeen R."/>
            <person name="Skuce C.D."/>
            <person name="Smith M.L."/>
            <person name="Sotheran E.C."/>
            <person name="Steingruber H.E."/>
            <person name="Steward C.A."/>
            <person name="Storey R."/>
            <person name="Swann R.M."/>
            <person name="Swarbreck D."/>
            <person name="Tabor P.E."/>
            <person name="Taudien S."/>
            <person name="Taylor T."/>
            <person name="Teague B."/>
            <person name="Thomas K."/>
            <person name="Thorpe A."/>
            <person name="Timms K."/>
            <person name="Tracey A."/>
            <person name="Trevanion S."/>
            <person name="Tromans A.C."/>
            <person name="d'Urso M."/>
            <person name="Verduzco D."/>
            <person name="Villasana D."/>
            <person name="Waldron L."/>
            <person name="Wall M."/>
            <person name="Wang Q."/>
            <person name="Warren J."/>
            <person name="Warry G.L."/>
            <person name="Wei X."/>
            <person name="West A."/>
            <person name="Whitehead S.L."/>
            <person name="Whiteley M.N."/>
            <person name="Wilkinson J.E."/>
            <person name="Willey D.L."/>
            <person name="Williams G."/>
            <person name="Williams L."/>
            <person name="Williamson A."/>
            <person name="Williamson H."/>
            <person name="Wilming L."/>
            <person name="Woodmansey R.L."/>
            <person name="Wray P.W."/>
            <person name="Yen J."/>
            <person name="Zhang J."/>
            <person name="Zhou J."/>
            <person name="Zoghbi H."/>
            <person name="Zorilla S."/>
            <person name="Buck D."/>
            <person name="Reinhardt R."/>
            <person name="Poustka A."/>
            <person name="Rosenthal A."/>
            <person name="Lehrach H."/>
            <person name="Meindl A."/>
            <person name="Minx P.J."/>
            <person name="Hillier L.W."/>
            <person name="Willard H.F."/>
            <person name="Wilson R.K."/>
            <person name="Waterston R.H."/>
            <person name="Rice C.M."/>
            <person name="Vaudin M."/>
            <person name="Coulson A."/>
            <person name="Nelson D.L."/>
            <person name="Weinstock G."/>
            <person name="Sulston J.E."/>
            <person name="Durbin R.M."/>
            <person name="Hubbard T."/>
            <person name="Gibbs R.A."/>
            <person name="Beck S."/>
            <person name="Rogers J."/>
            <person name="Bentley D.R."/>
        </authorList>
    </citation>
    <scope>NUCLEOTIDE SEQUENCE [LARGE SCALE GENOMIC DNA]</scope>
</reference>
<reference key="2">
    <citation type="journal article" date="2004" name="Genome Res.">
        <title>The status, quality, and expansion of the NIH full-length cDNA project: the Mammalian Gene Collection (MGC).</title>
        <authorList>
            <consortium name="The MGC Project Team"/>
        </authorList>
    </citation>
    <scope>NUCLEOTIDE SEQUENCE [LARGE SCALE MRNA] (ISOFORM 1)</scope>
    <source>
        <tissue>Brain</tissue>
    </source>
</reference>
<reference key="3">
    <citation type="journal article" date="2007" name="BMC Genomics">
        <title>The full-ORF clone resource of the German cDNA consortium.</title>
        <authorList>
            <person name="Bechtel S."/>
            <person name="Rosenfelder H."/>
            <person name="Duda A."/>
            <person name="Schmidt C.P."/>
            <person name="Ernst U."/>
            <person name="Wellenreuther R."/>
            <person name="Mehrle A."/>
            <person name="Schuster C."/>
            <person name="Bahr A."/>
            <person name="Bloecker H."/>
            <person name="Heubner D."/>
            <person name="Hoerlein A."/>
            <person name="Michel G."/>
            <person name="Wedler H."/>
            <person name="Koehrer K."/>
            <person name="Ottenwaelder B."/>
            <person name="Poustka A."/>
            <person name="Wiemann S."/>
            <person name="Schupp I."/>
        </authorList>
    </citation>
    <scope>NUCLEOTIDE SEQUENCE [LARGE SCALE MRNA] OF 10-836 (ISOFORM 2)</scope>
    <source>
        <tissue>Amygdala</tissue>
    </source>
</reference>
<reference key="4">
    <citation type="journal article" date="2008" name="J. Biol. Chem.">
        <title>A novel CCCH-zinc finger protein family regulates proinflammatory activation of macrophages.</title>
        <authorList>
            <person name="Liang J."/>
            <person name="Wang J."/>
            <person name="Azfer A."/>
            <person name="Song W."/>
            <person name="Tromp G."/>
            <person name="Kolattukudy P.E."/>
            <person name="Fu M."/>
        </authorList>
    </citation>
    <scope>IDENTIFICATION</scope>
</reference>
<name>ZC12B_HUMAN</name>
<gene>
    <name type="primary">ZC3H12B</name>
    <name type="synonym">CXorf32</name>
    <name type="synonym">MCPIP2</name>
</gene>
<accession>Q5HYM0</accession>
<accession>B2RTQ3</accession>
<accession>E9PAJ6</accession>
<accession>Q5H9C0</accession>
<organism>
    <name type="scientific">Homo sapiens</name>
    <name type="common">Human</name>
    <dbReference type="NCBI Taxonomy" id="9606"/>
    <lineage>
        <taxon>Eukaryota</taxon>
        <taxon>Metazoa</taxon>
        <taxon>Chordata</taxon>
        <taxon>Craniata</taxon>
        <taxon>Vertebrata</taxon>
        <taxon>Euteleostomi</taxon>
        <taxon>Mammalia</taxon>
        <taxon>Eutheria</taxon>
        <taxon>Euarchontoglires</taxon>
        <taxon>Primates</taxon>
        <taxon>Haplorrhini</taxon>
        <taxon>Catarrhini</taxon>
        <taxon>Hominidae</taxon>
        <taxon>Homo</taxon>
    </lineage>
</organism>
<evidence type="ECO:0000255" key="1"/>
<evidence type="ECO:0000255" key="2">
    <source>
        <dbReference type="PROSITE-ProRule" id="PRU00723"/>
    </source>
</evidence>
<evidence type="ECO:0000256" key="3">
    <source>
        <dbReference type="SAM" id="MobiDB-lite"/>
    </source>
</evidence>
<evidence type="ECO:0000303" key="4">
    <source>
    </source>
</evidence>
<evidence type="ECO:0000305" key="5"/>
<evidence type="ECO:0007829" key="6">
    <source>
        <dbReference type="PDB" id="6SJD"/>
    </source>
</evidence>
<sequence length="836" mass="94205">MTATAEVETPKMEKSASKEEKQQPKQDSTEQGNADSEEWMSSESDPEQISLKSSDNSKSCQPRDGQLKKKEMHSKPHRQLCRSPCLDRPSFSQSSILQDGKLDLEKEYQAKMEFALKLGYAEEQIQSVLNKLGPESLINDVLAELVRLGNKGDSEGQINLSLLVPRGPSSREIASPELSLEDEIDNSDNLRPVVIDGSNVAMSHGNKEEFSCRGIQLAVDWFLDKGHKDITVFVPAWRKEQSRPDAPITDQDILRKLEKEKILVFTPSRRVQGRRVVCYDDRFIVKLAFDSDGIIVSNDNYRDLQVEKPEWKKFIEERLLMYSFVNDKFMPPDDPLGRHGPSLENFLRKRPIVPEHKKQPCPYGKKCTYGHKCKYYHPERANQPQRSVADELRISAKLSTVKTMSEGTLAKCGTGMSSAKGEITSEVKRVAPKRQSDPSIRSVAMEPEEWLSIARKPEASSVPSLVTALSVPTIPPPKSHAVGALNTRSASSPVPGSSHFPHQKASLEHMASMQYPPILVTNSHGTPISYAEQYPKFESMGDHGYYSMLGDFSKLNINSMHNREYYMAEVDRGVYARNPNLCSDSRVSHTRNDNYSSYNNVYLAVADTHPEGNLKLHRSASQNRLQPFPHGYHEALTRVQSYGPEDSKQGPHKQSVPHLALHAQHPSTGTRSSCPADYPMPPNIHPGATPQPGRALVMTRMDSISDSRLYESNPVRQRRPPLCREQHASWDPLPCTTDSYGYHSYPLSNSLMQPCYEPVMVRSVPEKMEQLWRNPWVGMCNDSREHMIPEHQYQTYKNLCNIFPSNIVLAVMEKNPHTADAQQLAALIVAKLRAAR</sequence>
<proteinExistence type="evidence at protein level"/>
<comment type="function">
    <text evidence="5">May function as RNase and regulate the levels of target RNA species.</text>
</comment>
<comment type="cofactor">
    <cofactor evidence="5">
        <name>Mg(2+)</name>
        <dbReference type="ChEBI" id="CHEBI:18420"/>
    </cofactor>
</comment>
<comment type="alternative products">
    <event type="alternative splicing"/>
    <isoform>
        <id>Q5HYM0-1</id>
        <name>1</name>
        <sequence type="displayed"/>
    </isoform>
    <isoform>
        <id>Q5HYM0-2</id>
        <name>2</name>
        <sequence type="described" ref="VSP_039896"/>
    </isoform>
</comment>
<comment type="similarity">
    <text evidence="5">Belongs to the ZC3H12 family.</text>
</comment>
<comment type="sequence caution" evidence="5">
    <conflict type="erroneous initiation">
        <sequence resource="EMBL-CDS" id="AAI40768"/>
    </conflict>
    <text>Truncated N-terminus.</text>
</comment>
<comment type="sequence caution" evidence="5">
    <conflict type="erroneous initiation">
        <sequence resource="EMBL-CDS" id="AAI71781"/>
    </conflict>
    <text>Truncated N-terminus.</text>
</comment>
<comment type="sequence caution" evidence="5">
    <conflict type="erroneous initiation">
        <sequence resource="EMBL-CDS" id="CAI46044"/>
    </conflict>
    <text>Truncated N-terminus.</text>
</comment>
<keyword id="KW-0002">3D-structure</keyword>
<keyword id="KW-0025">Alternative splicing</keyword>
<keyword id="KW-0255">Endonuclease</keyword>
<keyword id="KW-0378">Hydrolase</keyword>
<keyword id="KW-0460">Magnesium</keyword>
<keyword id="KW-0479">Metal-binding</keyword>
<keyword id="KW-0540">Nuclease</keyword>
<keyword id="KW-1267">Proteomics identification</keyword>
<keyword id="KW-1185">Reference proteome</keyword>
<keyword id="KW-0862">Zinc</keyword>
<keyword id="KW-0863">Zinc-finger</keyword>